<name>SECB_SALAR</name>
<keyword id="KW-0143">Chaperone</keyword>
<keyword id="KW-0963">Cytoplasm</keyword>
<keyword id="KW-0653">Protein transport</keyword>
<keyword id="KW-1185">Reference proteome</keyword>
<keyword id="KW-0811">Translocation</keyword>
<keyword id="KW-0813">Transport</keyword>
<reference key="1">
    <citation type="submission" date="2007-11" db="EMBL/GenBank/DDBJ databases">
        <authorList>
            <consortium name="The Salmonella enterica serovar Arizonae Genome Sequencing Project"/>
            <person name="McClelland M."/>
            <person name="Sanderson E.K."/>
            <person name="Porwollik S."/>
            <person name="Spieth J."/>
            <person name="Clifton W.S."/>
            <person name="Fulton R."/>
            <person name="Chunyan W."/>
            <person name="Wollam A."/>
            <person name="Shah N."/>
            <person name="Pepin K."/>
            <person name="Bhonagiri V."/>
            <person name="Nash W."/>
            <person name="Johnson M."/>
            <person name="Thiruvilangam P."/>
            <person name="Wilson R."/>
        </authorList>
    </citation>
    <scope>NUCLEOTIDE SEQUENCE [LARGE SCALE GENOMIC DNA]</scope>
    <source>
        <strain>ATCC BAA-731 / CDC346-86 / RSK2980</strain>
    </source>
</reference>
<sequence length="155" mass="17245">MSEQNNTEMAFQIQRIYTKDVSFEAPNAPHVFQKDWQPEVKLDLDTASSQLADDVYEVVLRVTVTASLGEETAFLCEVQQAGIFSISGIEGTQMAHCLGAYCPNILFPYARECITSLVSRGTFPQLNLAPVNFDALFMNYLQQQAGEGTEEHQDA</sequence>
<proteinExistence type="inferred from homology"/>
<organism>
    <name type="scientific">Salmonella arizonae (strain ATCC BAA-731 / CDC346-86 / RSK2980)</name>
    <dbReference type="NCBI Taxonomy" id="41514"/>
    <lineage>
        <taxon>Bacteria</taxon>
        <taxon>Pseudomonadati</taxon>
        <taxon>Pseudomonadota</taxon>
        <taxon>Gammaproteobacteria</taxon>
        <taxon>Enterobacterales</taxon>
        <taxon>Enterobacteriaceae</taxon>
        <taxon>Salmonella</taxon>
    </lineage>
</organism>
<protein>
    <recommendedName>
        <fullName evidence="1">Protein-export protein SecB</fullName>
    </recommendedName>
</protein>
<feature type="chain" id="PRO_1000083864" description="Protein-export protein SecB">
    <location>
        <begin position="1"/>
        <end position="155"/>
    </location>
</feature>
<comment type="function">
    <text evidence="1">One of the proteins required for the normal export of preproteins out of the cell cytoplasm. It is a molecular chaperone that binds to a subset of precursor proteins, maintaining them in a translocation-competent state. It also specifically binds to its receptor SecA.</text>
</comment>
<comment type="subunit">
    <text evidence="1">Homotetramer, a dimer of dimers. One homotetramer interacts with 1 SecA dimer.</text>
</comment>
<comment type="subcellular location">
    <subcellularLocation>
        <location evidence="1">Cytoplasm</location>
    </subcellularLocation>
</comment>
<comment type="similarity">
    <text evidence="1">Belongs to the SecB family.</text>
</comment>
<evidence type="ECO:0000255" key="1">
    <source>
        <dbReference type="HAMAP-Rule" id="MF_00821"/>
    </source>
</evidence>
<gene>
    <name evidence="1" type="primary">secB</name>
    <name type="ordered locus">SARI_03940</name>
</gene>
<accession>A9MKR5</accession>
<dbReference type="EMBL" id="CP000880">
    <property type="protein sequence ID" value="ABX23734.1"/>
    <property type="molecule type" value="Genomic_DNA"/>
</dbReference>
<dbReference type="SMR" id="A9MKR5"/>
<dbReference type="STRING" id="41514.SARI_03940"/>
<dbReference type="KEGG" id="ses:SARI_03940"/>
<dbReference type="HOGENOM" id="CLU_111574_1_0_6"/>
<dbReference type="Proteomes" id="UP000002084">
    <property type="component" value="Chromosome"/>
</dbReference>
<dbReference type="GO" id="GO:0005737">
    <property type="term" value="C:cytoplasm"/>
    <property type="evidence" value="ECO:0007669"/>
    <property type="project" value="UniProtKB-SubCell"/>
</dbReference>
<dbReference type="GO" id="GO:0051082">
    <property type="term" value="F:unfolded protein binding"/>
    <property type="evidence" value="ECO:0007669"/>
    <property type="project" value="InterPro"/>
</dbReference>
<dbReference type="GO" id="GO:0006457">
    <property type="term" value="P:protein folding"/>
    <property type="evidence" value="ECO:0007669"/>
    <property type="project" value="UniProtKB-UniRule"/>
</dbReference>
<dbReference type="GO" id="GO:0051262">
    <property type="term" value="P:protein tetramerization"/>
    <property type="evidence" value="ECO:0007669"/>
    <property type="project" value="InterPro"/>
</dbReference>
<dbReference type="GO" id="GO:0015031">
    <property type="term" value="P:protein transport"/>
    <property type="evidence" value="ECO:0007669"/>
    <property type="project" value="UniProtKB-UniRule"/>
</dbReference>
<dbReference type="CDD" id="cd00557">
    <property type="entry name" value="Translocase_SecB"/>
    <property type="match status" value="1"/>
</dbReference>
<dbReference type="FunFam" id="3.10.420.10:FF:000001">
    <property type="entry name" value="Protein-export chaperone SecB"/>
    <property type="match status" value="1"/>
</dbReference>
<dbReference type="Gene3D" id="3.10.420.10">
    <property type="entry name" value="SecB-like"/>
    <property type="match status" value="1"/>
</dbReference>
<dbReference type="HAMAP" id="MF_00821">
    <property type="entry name" value="SecB"/>
    <property type="match status" value="1"/>
</dbReference>
<dbReference type="InterPro" id="IPR003708">
    <property type="entry name" value="SecB"/>
</dbReference>
<dbReference type="InterPro" id="IPR035958">
    <property type="entry name" value="SecB-like_sf"/>
</dbReference>
<dbReference type="NCBIfam" id="NF004390">
    <property type="entry name" value="PRK05751.1-1"/>
    <property type="match status" value="1"/>
</dbReference>
<dbReference type="NCBIfam" id="NF004393">
    <property type="entry name" value="PRK05751.1-4"/>
    <property type="match status" value="1"/>
</dbReference>
<dbReference type="NCBIfam" id="TIGR00809">
    <property type="entry name" value="secB"/>
    <property type="match status" value="1"/>
</dbReference>
<dbReference type="PANTHER" id="PTHR36918">
    <property type="match status" value="1"/>
</dbReference>
<dbReference type="PANTHER" id="PTHR36918:SF1">
    <property type="entry name" value="PROTEIN-EXPORT PROTEIN SECB"/>
    <property type="match status" value="1"/>
</dbReference>
<dbReference type="Pfam" id="PF02556">
    <property type="entry name" value="SecB"/>
    <property type="match status" value="1"/>
</dbReference>
<dbReference type="PRINTS" id="PR01594">
    <property type="entry name" value="SECBCHAPRONE"/>
</dbReference>
<dbReference type="SUPFAM" id="SSF54611">
    <property type="entry name" value="SecB-like"/>
    <property type="match status" value="1"/>
</dbReference>